<comment type="function">
    <text evidence="1">Core subunit of the mitochondrial membrane respiratory chain NADH dehydrogenase (Complex I) that is believed to belong to the minimal assembly required for catalysis. Complex I functions in the transfer of electrons from NADH to the respiratory chain. The immediate electron acceptor for the enzyme is believed to be ubiquinone (By similarity).</text>
</comment>
<comment type="catalytic activity">
    <reaction>
        <text>a ubiquinone + NADH + 5 H(+)(in) = a ubiquinol + NAD(+) + 4 H(+)(out)</text>
        <dbReference type="Rhea" id="RHEA:29091"/>
        <dbReference type="Rhea" id="RHEA-COMP:9565"/>
        <dbReference type="Rhea" id="RHEA-COMP:9566"/>
        <dbReference type="ChEBI" id="CHEBI:15378"/>
        <dbReference type="ChEBI" id="CHEBI:16389"/>
        <dbReference type="ChEBI" id="CHEBI:17976"/>
        <dbReference type="ChEBI" id="CHEBI:57540"/>
        <dbReference type="ChEBI" id="CHEBI:57945"/>
        <dbReference type="EC" id="7.1.1.2"/>
    </reaction>
</comment>
<comment type="subcellular location">
    <subcellularLocation>
        <location evidence="1">Mitochondrion membrane</location>
        <topology evidence="1">Multi-pass membrane protein</topology>
    </subcellularLocation>
</comment>
<comment type="similarity">
    <text evidence="3">Belongs to the complex I subunit 3 family.</text>
</comment>
<accession>P26847</accession>
<sequence length="118" mass="13688">MEFAPIFVYLVISLLLSLILIGVSFLFASSSSLAYPEKLSAYECGFDPFDDARSRFDIRFYLVSILFIIFDLEVTFLFPWAVSLNKIGLFGFWSMMVFLFILTIGFVYEWKKGALDWE</sequence>
<keyword id="KW-0249">Electron transport</keyword>
<keyword id="KW-0472">Membrane</keyword>
<keyword id="KW-0496">Mitochondrion</keyword>
<keyword id="KW-0520">NAD</keyword>
<keyword id="KW-0679">Respiratory chain</keyword>
<keyword id="KW-1278">Translocase</keyword>
<keyword id="KW-0812">Transmembrane</keyword>
<keyword id="KW-1133">Transmembrane helix</keyword>
<keyword id="KW-0813">Transport</keyword>
<keyword id="KW-0830">Ubiquinone</keyword>
<protein>
    <recommendedName>
        <fullName>NADH-ubiquinone oxidoreductase chain 3</fullName>
        <ecNumber>7.1.1.2</ecNumber>
    </recommendedName>
    <alternativeName>
        <fullName>NADH dehydrogenase subunit 3</fullName>
    </alternativeName>
</protein>
<proteinExistence type="inferred from homology"/>
<dbReference type="EC" id="7.1.1.2"/>
<dbReference type="EMBL" id="M68929">
    <property type="protein sequence ID" value="AAC09408.1"/>
    <property type="molecule type" value="Genomic_DNA"/>
</dbReference>
<dbReference type="PIR" id="S25944">
    <property type="entry name" value="S25944"/>
</dbReference>
<dbReference type="RefSeq" id="NP_054411.1">
    <property type="nucleotide sequence ID" value="NC_001660.1"/>
</dbReference>
<dbReference type="SMR" id="P26847"/>
<dbReference type="GeneID" id="2702459"/>
<dbReference type="GO" id="GO:0031966">
    <property type="term" value="C:mitochondrial membrane"/>
    <property type="evidence" value="ECO:0007669"/>
    <property type="project" value="UniProtKB-SubCell"/>
</dbReference>
<dbReference type="GO" id="GO:0008137">
    <property type="term" value="F:NADH dehydrogenase (ubiquinone) activity"/>
    <property type="evidence" value="ECO:0007669"/>
    <property type="project" value="UniProtKB-EC"/>
</dbReference>
<dbReference type="FunFam" id="1.20.58.1610:FF:000004">
    <property type="entry name" value="NADH-quinone oxidoreductase subunit A"/>
    <property type="match status" value="1"/>
</dbReference>
<dbReference type="Gene3D" id="1.20.58.1610">
    <property type="entry name" value="NADH:ubiquinone/plastoquinone oxidoreductase, chain 3"/>
    <property type="match status" value="1"/>
</dbReference>
<dbReference type="HAMAP" id="MF_01394">
    <property type="entry name" value="NDH1_NuoA"/>
    <property type="match status" value="1"/>
</dbReference>
<dbReference type="InterPro" id="IPR023043">
    <property type="entry name" value="NAD(P)H_OxRDtase_bac/plastid"/>
</dbReference>
<dbReference type="InterPro" id="IPR000440">
    <property type="entry name" value="NADH_UbQ/plastoQ_OxRdtase_su3"/>
</dbReference>
<dbReference type="InterPro" id="IPR038430">
    <property type="entry name" value="NDAH_ubi_oxred_su3_sf"/>
</dbReference>
<dbReference type="PANTHER" id="PTHR11058">
    <property type="entry name" value="NADH-UBIQUINONE OXIDOREDUCTASE CHAIN 3"/>
    <property type="match status" value="1"/>
</dbReference>
<dbReference type="PANTHER" id="PTHR11058:SF9">
    <property type="entry name" value="NADH-UBIQUINONE OXIDOREDUCTASE CHAIN 3"/>
    <property type="match status" value="1"/>
</dbReference>
<dbReference type="Pfam" id="PF00507">
    <property type="entry name" value="Oxidored_q4"/>
    <property type="match status" value="1"/>
</dbReference>
<organism>
    <name type="scientific">Marchantia polymorpha</name>
    <name type="common">Common liverwort</name>
    <name type="synonym">Marchantia aquatica</name>
    <dbReference type="NCBI Taxonomy" id="3197"/>
    <lineage>
        <taxon>Eukaryota</taxon>
        <taxon>Viridiplantae</taxon>
        <taxon>Streptophyta</taxon>
        <taxon>Embryophyta</taxon>
        <taxon>Marchantiophyta</taxon>
        <taxon>Marchantiopsida</taxon>
        <taxon>Marchantiidae</taxon>
        <taxon>Marchantiales</taxon>
        <taxon>Marchantiaceae</taxon>
        <taxon>Marchantia</taxon>
    </lineage>
</organism>
<evidence type="ECO:0000250" key="1"/>
<evidence type="ECO:0000255" key="2"/>
<evidence type="ECO:0000305" key="3"/>
<geneLocation type="mitochondrion"/>
<feature type="chain" id="PRO_0000117762" description="NADH-ubiquinone oxidoreductase chain 3">
    <location>
        <begin position="1"/>
        <end position="118"/>
    </location>
</feature>
<feature type="transmembrane region" description="Helical" evidence="2">
    <location>
        <begin position="6"/>
        <end position="26"/>
    </location>
</feature>
<feature type="transmembrane region" description="Helical" evidence="2">
    <location>
        <begin position="62"/>
        <end position="82"/>
    </location>
</feature>
<feature type="transmembrane region" description="Helical" evidence="2">
    <location>
        <begin position="87"/>
        <end position="107"/>
    </location>
</feature>
<reference key="1">
    <citation type="journal article" date="1992" name="J. Mol. Biol.">
        <title>Gene organization deduced from the complete sequence of liverwort Marchantia polymorpha mitochondrial DNA. A primitive form of plant mitochondrial genome.</title>
        <authorList>
            <person name="Oda K."/>
            <person name="Yamato K."/>
            <person name="Ohta E."/>
            <person name="Nakamura Y."/>
            <person name="Takemura M."/>
            <person name="Nozato N."/>
            <person name="Akashi K."/>
            <person name="Kanegae T."/>
            <person name="Ogura Y."/>
            <person name="Kohchi T."/>
            <person name="Ohyama K."/>
        </authorList>
    </citation>
    <scope>NUCLEOTIDE SEQUENCE [GENOMIC DNA]</scope>
</reference>
<gene>
    <name type="primary">ND3</name>
    <name type="synonym">NAD3</name>
</gene>
<name>NU3M_MARPO</name>